<feature type="chain" id="PRO_0000452693" description="Transcription factor atf-7">
    <location>
        <begin position="1"/>
        <end position="509"/>
    </location>
</feature>
<feature type="domain" description="bZIP" evidence="1">
    <location>
        <begin position="391"/>
        <end position="464"/>
    </location>
</feature>
<feature type="region of interest" description="Disordered" evidence="2">
    <location>
        <begin position="283"/>
        <end position="318"/>
    </location>
</feature>
<feature type="region of interest" description="Disordered" evidence="2">
    <location>
        <begin position="337"/>
        <end position="400"/>
    </location>
</feature>
<feature type="region of interest" description="Basic motif" evidence="1">
    <location>
        <begin position="393"/>
        <end position="413"/>
    </location>
</feature>
<feature type="region of interest" description="Leucine-zipper" evidence="1">
    <location>
        <begin position="419"/>
        <end position="450"/>
    </location>
</feature>
<feature type="compositionally biased region" description="Polar residues" evidence="2">
    <location>
        <begin position="283"/>
        <end position="303"/>
    </location>
</feature>
<feature type="compositionally biased region" description="Basic and acidic residues" evidence="2">
    <location>
        <begin position="308"/>
        <end position="318"/>
    </location>
</feature>
<feature type="compositionally biased region" description="Low complexity" evidence="2">
    <location>
        <begin position="337"/>
        <end position="364"/>
    </location>
</feature>
<feature type="compositionally biased region" description="Basic and acidic residues" evidence="2">
    <location>
        <begin position="390"/>
        <end position="400"/>
    </location>
</feature>
<feature type="splice variant" id="VSP_061038" description="In isoform d." evidence="8">
    <location>
        <begin position="1"/>
        <end position="68"/>
    </location>
</feature>
<feature type="splice variant" id="VSP_061039" description="In isoform b and isoform a.">
    <original>MATTMMTSSASPPESGELDVASAVASAAAALISPMVMPTSMTNGKDMTKTSQILNEYFNMMVG</original>
    <variation>MSVVTTTSMQSDSK</variation>
    <location>
        <begin position="1"/>
        <end position="63"/>
    </location>
</feature>
<feature type="splice variant" id="VSP_061040" description="In isoform d.">
    <original>AIQTQNQ</original>
    <variation>VRNEILY</variation>
    <location>
        <begin position="435"/>
        <end position="441"/>
    </location>
</feature>
<feature type="splice variant" id="VSP_061041" description="In isoform a." evidence="8">
    <location>
        <begin position="435"/>
        <end position="437"/>
    </location>
</feature>
<feature type="splice variant" id="VSP_061042" description="In isoform d." evidence="8">
    <location>
        <begin position="442"/>
        <end position="509"/>
    </location>
</feature>
<feature type="mutagenesis site" description="In qd22; increases level of activated MAP kinase pmk-1 compared to wild-type. Simultaneous RNA-imediated knockdown of atf-7 confers increased resistance to Gram-negative bacterium P.aeruginosa." evidence="3">
    <original>P</original>
    <variation>S</variation>
    <location>
        <position position="107"/>
    </location>
</feature>
<gene>
    <name evidence="12" type="primary">atf-7</name>
    <name evidence="12" type="ORF">C07G2.2</name>
</gene>
<organism evidence="9">
    <name type="scientific">Caenorhabditis elegans</name>
    <dbReference type="NCBI Taxonomy" id="6239"/>
    <lineage>
        <taxon>Eukaryota</taxon>
        <taxon>Metazoa</taxon>
        <taxon>Ecdysozoa</taxon>
        <taxon>Nematoda</taxon>
        <taxon>Chromadorea</taxon>
        <taxon>Rhabditida</taxon>
        <taxon>Rhabditina</taxon>
        <taxon>Rhabditomorpha</taxon>
        <taxon>Rhabditoidea</taxon>
        <taxon>Rhabditidae</taxon>
        <taxon>Peloderinae</taxon>
        <taxon>Caenorhabditis</taxon>
    </lineage>
</organism>
<protein>
    <recommendedName>
        <fullName evidence="8">Transcription factor atf-7</fullName>
    </recommendedName>
    <alternativeName>
        <fullName evidence="12">cAMP-dependent transcription factor family member 7</fullName>
    </alternativeName>
</protein>
<proteinExistence type="evidence at protein level"/>
<reference evidence="9" key="1">
    <citation type="journal article" date="1998" name="Science">
        <title>Genome sequence of the nematode C. elegans: a platform for investigating biology.</title>
        <authorList>
            <consortium name="The C. elegans sequencing consortium"/>
        </authorList>
    </citation>
    <scope>NUCLEOTIDE SEQUENCE [LARGE SCALE GENOMIC DNA]</scope>
    <source>
        <strain evidence="9">Bristol N2</strain>
    </source>
</reference>
<reference evidence="8" key="2">
    <citation type="journal article" date="2010" name="PLoS Genet.">
        <title>Phosphorylation of the conserved transcription factor ATF-7 by PMK-1 p38 MAPK regulates innate immunity in Caenorhabditis elegans.</title>
        <authorList>
            <person name="Shivers R.P."/>
            <person name="Pagano D.J."/>
            <person name="Kooistra T."/>
            <person name="Richardson C.E."/>
            <person name="Reddy K.C."/>
            <person name="Whitney J.K."/>
            <person name="Kamanzi O."/>
            <person name="Matsumoto K."/>
            <person name="Hisamoto N."/>
            <person name="Kim D.H."/>
        </authorList>
    </citation>
    <scope>FUNCTION</scope>
    <scope>INTERACTION WITH PMK-1</scope>
    <scope>SUBCELLULAR LOCATION</scope>
    <scope>TISSUE SPECIFICITY</scope>
    <scope>DISRUPTION PHENOTYPE</scope>
    <scope>MUTAGENESIS OF PRO-107</scope>
</reference>
<reference evidence="8" key="3">
    <citation type="journal article" date="2013" name="PLoS Genet.">
        <title>RFX transcription factor DAF-19 regulates 5-HT and innate immune responses to pathogenic bacteria in Caenorhabditis elegans.</title>
        <authorList>
            <person name="Xie Y."/>
            <person name="Moussaif M."/>
            <person name="Choi S."/>
            <person name="Xu L."/>
            <person name="Sze J.Y."/>
        </authorList>
    </citation>
    <scope>FUNCTION</scope>
</reference>
<reference evidence="8" key="4">
    <citation type="journal article" date="2015" name="PLoS Genet.">
        <title>The developmental intestinal regulator ELT-2 controls p38-dependent immune responses in adult C. elegans.</title>
        <authorList>
            <person name="Block D.H."/>
            <person name="Twumasi-Boateng K."/>
            <person name="Kang H.S."/>
            <person name="Carlisle J.A."/>
            <person name="Hanganu A."/>
            <person name="Lai T.Y."/>
            <person name="Shapira M."/>
        </authorList>
    </citation>
    <scope>FUNCTION</scope>
</reference>
<reference evidence="8" key="5">
    <citation type="journal article" date="2017" name="PLoS ONE">
        <title>Identification of ATF-7 and the insulin signaling pathway in the regulation of metallothionein in C. elegans suggests roles in aging and reactive oxygen species.</title>
        <authorList>
            <person name="Hall J.A."/>
            <person name="McElwee M.K."/>
            <person name="Freedman J.H."/>
        </authorList>
    </citation>
    <scope>FUNCTION</scope>
    <scope>DISRUPTION PHENOTYPE</scope>
</reference>
<reference evidence="8" key="6">
    <citation type="journal article" date="2019" name="PLoS Genet.">
        <title>Global transcriptional regulation of innate immunity by ATF-7 in C. elegans.</title>
        <authorList>
            <person name="Fletcher M."/>
            <person name="Tillman E.J."/>
            <person name="Butty V.L."/>
            <person name="Levine S.S."/>
            <person name="Kim D.H."/>
        </authorList>
    </citation>
    <scope>FUNCTION</scope>
    <scope>SUBCELLULAR LOCATION</scope>
</reference>
<evidence type="ECO:0000255" key="1">
    <source>
        <dbReference type="PROSITE-ProRule" id="PRU00978"/>
    </source>
</evidence>
<evidence type="ECO:0000256" key="2">
    <source>
        <dbReference type="SAM" id="MobiDB-lite"/>
    </source>
</evidence>
<evidence type="ECO:0000269" key="3">
    <source>
    </source>
</evidence>
<evidence type="ECO:0000269" key="4">
    <source>
    </source>
</evidence>
<evidence type="ECO:0000269" key="5">
    <source>
    </source>
</evidence>
<evidence type="ECO:0000269" key="6">
    <source>
    </source>
</evidence>
<evidence type="ECO:0000269" key="7">
    <source>
    </source>
</evidence>
<evidence type="ECO:0000305" key="8"/>
<evidence type="ECO:0000312" key="9">
    <source>
        <dbReference type="Proteomes" id="UP000001940"/>
    </source>
</evidence>
<evidence type="ECO:0000312" key="10">
    <source>
        <dbReference type="WormBase" id="C07G2.2a"/>
    </source>
</evidence>
<evidence type="ECO:0000312" key="11">
    <source>
        <dbReference type="WormBase" id="C07G2.2b"/>
    </source>
</evidence>
<evidence type="ECO:0000312" key="12">
    <source>
        <dbReference type="WormBase" id="C07G2.2c"/>
    </source>
</evidence>
<evidence type="ECO:0000312" key="13">
    <source>
        <dbReference type="WormBase" id="C07G2.2d"/>
    </source>
</evidence>
<name>ATF7_CAEEL</name>
<keyword id="KW-0025">Alternative splicing</keyword>
<keyword id="KW-0158">Chromosome</keyword>
<keyword id="KW-0539">Nucleus</keyword>
<keyword id="KW-1185">Reference proteome</keyword>
<keyword id="KW-0804">Transcription</keyword>
<keyword id="KW-0805">Transcription regulation</keyword>
<comment type="function">
    <text evidence="3 4 5 6 7">Transcription factor which regulates the transcription of various genes, including those involved in innate immunity and oxidative stress responses (PubMed:20369020, PubMed:28632756, PubMed:30789901). Binds to promoter regions of genes, probably at 5'-[GACGTCA]-3' consensus sequences (PubMed:30789901). Together with transcription factor daf-19, involved in regulation of the serotonergic response of ADF neurons to pathogenic food (PubMed:23505381). Modulates response to infection by the Gram-negative bacterium P.aeruginosa, acting downstream of the p38 signal transduction pathway effector serine/threonine kinase pmk-1 (PubMed:20369020, PubMed:30789901). May act with transcription factor elt-2 to control p38 gene induction in response to bacterial infection (PubMed:26016853). May be phosphorylated by pmk-1 (PubMed:20369020). Regulates transcription of the metallothionein gene, mtl-1, perhaps acting downstream of pmk-1 (PubMed:28632756).</text>
</comment>
<comment type="subunit">
    <text evidence="3">Interacts with serine/threonine kinase pmk-1; perhaps in a manner dependent on dual specificity protein kinase sek-1.</text>
</comment>
<comment type="subcellular location">
    <subcellularLocation>
        <location evidence="3">Nucleus</location>
    </subcellularLocation>
    <subcellularLocation>
        <location evidence="7">Chromosome</location>
    </subcellularLocation>
</comment>
<comment type="alternative products">
    <event type="alternative splicing"/>
    <isoform>
        <id>Q86MD3-1</id>
        <name evidence="12">c</name>
        <sequence type="displayed"/>
    </isoform>
    <isoform>
        <id>Q86MD3-2</id>
        <name evidence="11">b</name>
        <sequence type="described" ref="VSP_061039"/>
    </isoform>
    <isoform>
        <id>Q86MD3-3</id>
        <name evidence="10">a</name>
        <sequence type="described" ref="VSP_061039 VSP_061041"/>
    </isoform>
    <isoform>
        <id>Q86MD3-4</id>
        <name evidence="13">d</name>
        <sequence type="described" ref="VSP_061038 VSP_061040 VSP_061042"/>
    </isoform>
</comment>
<comment type="tissue specificity">
    <text evidence="3">Expressed in intestinal cells.</text>
</comment>
<comment type="disruption phenotype">
    <text evidence="3 6">RNAi-mediated knockdown increases susceptibility to infection by the Gram-negative bacterium P.aeruginosa (PubMed:20369020). Up-regulates expression of metallothionein mtl-1 (PubMed:28632756).</text>
</comment>
<comment type="similarity">
    <text evidence="8">Belongs to the bZIP family.</text>
</comment>
<dbReference type="EMBL" id="BX284603">
    <property type="protein sequence ID" value="CAA83680.1"/>
    <property type="molecule type" value="Genomic_DNA"/>
</dbReference>
<dbReference type="EMBL" id="BX284603">
    <property type="protein sequence ID" value="CAB63430.2"/>
    <property type="molecule type" value="Genomic_DNA"/>
</dbReference>
<dbReference type="EMBL" id="BX284603">
    <property type="protein sequence ID" value="CAD88215.1"/>
    <property type="molecule type" value="Genomic_DNA"/>
</dbReference>
<dbReference type="EMBL" id="BX284603">
    <property type="protein sequence ID" value="CAQ58094.1"/>
    <property type="molecule type" value="Genomic_DNA"/>
</dbReference>
<dbReference type="PIR" id="T19062">
    <property type="entry name" value="T19062"/>
</dbReference>
<dbReference type="RefSeq" id="NP_001021161.1">
    <property type="nucleotide sequence ID" value="NM_001025990.3"/>
</dbReference>
<dbReference type="RefSeq" id="NP_001129834.1">
    <property type="nucleotide sequence ID" value="NM_001136362.2"/>
</dbReference>
<dbReference type="RefSeq" id="NP_001370161.1">
    <molecule id="Q86MD3-1"/>
    <property type="nucleotide sequence ID" value="NM_001384076.2"/>
</dbReference>
<dbReference type="RefSeq" id="NP_001379489.1">
    <molecule id="Q86MD3-4"/>
    <property type="nucleotide sequence ID" value="NM_001393322.1"/>
</dbReference>
<dbReference type="RefSeq" id="NP_497913.1">
    <molecule id="Q86MD3-2"/>
    <property type="nucleotide sequence ID" value="NM_065512.5"/>
</dbReference>
<dbReference type="RefSeq" id="NP_497914.2">
    <molecule id="Q86MD3-3"/>
    <property type="nucleotide sequence ID" value="NM_065513.5"/>
</dbReference>
<dbReference type="SMR" id="Q86MD3"/>
<dbReference type="FunCoup" id="Q86MD3">
    <property type="interactions" value="45"/>
</dbReference>
<dbReference type="IntAct" id="Q86MD3">
    <property type="interactions" value="5"/>
</dbReference>
<dbReference type="STRING" id="6239.C07G2.2c.2"/>
<dbReference type="PaxDb" id="6239-C07G2.2c.1"/>
<dbReference type="EnsemblMetazoa" id="C07G2.2a.1">
    <molecule id="Q86MD3-3"/>
    <property type="protein sequence ID" value="C07G2.2a.1"/>
    <property type="gene ID" value="WBGene00000223"/>
</dbReference>
<dbReference type="EnsemblMetazoa" id="C07G2.2b.1">
    <molecule id="Q86MD3-2"/>
    <property type="protein sequence ID" value="C07G2.2b.1"/>
    <property type="gene ID" value="WBGene00000223"/>
</dbReference>
<dbReference type="EnsemblMetazoa" id="C07G2.2b.2">
    <molecule id="Q86MD3-2"/>
    <property type="protein sequence ID" value="C07G2.2b.2"/>
    <property type="gene ID" value="WBGene00000223"/>
</dbReference>
<dbReference type="EnsemblMetazoa" id="C07G2.2c.1">
    <molecule id="Q86MD3-1"/>
    <property type="protein sequence ID" value="C07G2.2c.1"/>
    <property type="gene ID" value="WBGene00000223"/>
</dbReference>
<dbReference type="EnsemblMetazoa" id="C07G2.2d.1">
    <molecule id="Q86MD3-4"/>
    <property type="protein sequence ID" value="C07G2.2d.1"/>
    <property type="gene ID" value="WBGene00000223"/>
</dbReference>
<dbReference type="EnsemblMetazoa" id="C07G2.2d.2">
    <molecule id="Q86MD3-4"/>
    <property type="protein sequence ID" value="C07G2.2d.2"/>
    <property type="gene ID" value="WBGene00000223"/>
</dbReference>
<dbReference type="EnsemblMetazoa" id="C07G2.2d.3">
    <molecule id="Q86MD3-4"/>
    <property type="protein sequence ID" value="C07G2.2d.3"/>
    <property type="gene ID" value="WBGene00000223"/>
</dbReference>
<dbReference type="EnsemblMetazoa" id="C07G2.2d.4">
    <molecule id="Q86MD3-4"/>
    <property type="protein sequence ID" value="C07G2.2d.4"/>
    <property type="gene ID" value="WBGene00000223"/>
</dbReference>
<dbReference type="GeneID" id="175587"/>
<dbReference type="KEGG" id="cel:CELE_C07G2.2"/>
<dbReference type="UCSC" id="C07G2.2a.2">
    <property type="organism name" value="c. elegans"/>
</dbReference>
<dbReference type="AGR" id="WB:WBGene00000223"/>
<dbReference type="CTD" id="175587"/>
<dbReference type="WormBase" id="C07G2.2a">
    <molecule id="Q86MD3-3"/>
    <property type="protein sequence ID" value="CE33597"/>
    <property type="gene ID" value="WBGene00000223"/>
    <property type="gene designation" value="atf-7"/>
</dbReference>
<dbReference type="WormBase" id="C07G2.2b">
    <molecule id="Q86MD3-2"/>
    <property type="protein sequence ID" value="CE19688"/>
    <property type="gene ID" value="WBGene00000223"/>
    <property type="gene designation" value="atf-7"/>
</dbReference>
<dbReference type="WormBase" id="C07G2.2c">
    <molecule id="Q86MD3-1"/>
    <property type="protein sequence ID" value="CE33598"/>
    <property type="gene ID" value="WBGene00000223"/>
    <property type="gene designation" value="atf-7"/>
</dbReference>
<dbReference type="WormBase" id="C07G2.2d">
    <molecule id="Q86MD3-4"/>
    <property type="protein sequence ID" value="CE42659"/>
    <property type="gene ID" value="WBGene00000223"/>
    <property type="gene designation" value="atf-7"/>
</dbReference>
<dbReference type="eggNOG" id="KOG1414">
    <property type="taxonomic scope" value="Eukaryota"/>
</dbReference>
<dbReference type="GeneTree" id="ENSGT00940000176028"/>
<dbReference type="HOGENOM" id="CLU_598848_0_0_1"/>
<dbReference type="InParanoid" id="Q86MD3"/>
<dbReference type="OMA" id="FREANRR"/>
<dbReference type="OrthoDB" id="5829382at2759"/>
<dbReference type="Reactome" id="R-CEL-3214847">
    <property type="pathway name" value="HATs acetylate histones"/>
</dbReference>
<dbReference type="Reactome" id="R-CEL-450341">
    <property type="pathway name" value="Activation of the AP-1 family of transcription factors"/>
</dbReference>
<dbReference type="SignaLink" id="Q86MD3"/>
<dbReference type="PRO" id="PR:Q86MD3"/>
<dbReference type="Proteomes" id="UP000001940">
    <property type="component" value="Chromosome III"/>
</dbReference>
<dbReference type="Bgee" id="WBGene00000223">
    <property type="expression patterns" value="Expressed in pharyngeal muscle cell (C elegans) and 4 other cell types or tissues"/>
</dbReference>
<dbReference type="ExpressionAtlas" id="Q86MD3">
    <property type="expression patterns" value="baseline and differential"/>
</dbReference>
<dbReference type="GO" id="GO:0000785">
    <property type="term" value="C:chromatin"/>
    <property type="evidence" value="ECO:0000314"/>
    <property type="project" value="UniProtKB"/>
</dbReference>
<dbReference type="GO" id="GO:0005634">
    <property type="term" value="C:nucleus"/>
    <property type="evidence" value="ECO:0000314"/>
    <property type="project" value="WormBase"/>
</dbReference>
<dbReference type="GO" id="GO:0035497">
    <property type="term" value="F:cAMP response element binding"/>
    <property type="evidence" value="ECO:0000318"/>
    <property type="project" value="GO_Central"/>
</dbReference>
<dbReference type="GO" id="GO:0003700">
    <property type="term" value="F:DNA-binding transcription factor activity"/>
    <property type="evidence" value="ECO:0000250"/>
    <property type="project" value="WormBase"/>
</dbReference>
<dbReference type="GO" id="GO:0000981">
    <property type="term" value="F:DNA-binding transcription factor activity, RNA polymerase II-specific"/>
    <property type="evidence" value="ECO:0000318"/>
    <property type="project" value="GO_Central"/>
</dbReference>
<dbReference type="GO" id="GO:0051019">
    <property type="term" value="F:mitogen-activated protein kinase binding"/>
    <property type="evidence" value="ECO:0000353"/>
    <property type="project" value="WormBase"/>
</dbReference>
<dbReference type="GO" id="GO:0000978">
    <property type="term" value="F:RNA polymerase II cis-regulatory region sequence-specific DNA binding"/>
    <property type="evidence" value="ECO:0000315"/>
    <property type="project" value="UniProtKB"/>
</dbReference>
<dbReference type="GO" id="GO:0140367">
    <property type="term" value="P:antibacterial innate immune response"/>
    <property type="evidence" value="ECO:0000315"/>
    <property type="project" value="WormBase"/>
</dbReference>
<dbReference type="GO" id="GO:0071248">
    <property type="term" value="P:cellular response to metal ion"/>
    <property type="evidence" value="ECO:0000315"/>
    <property type="project" value="UniProtKB"/>
</dbReference>
<dbReference type="GO" id="GO:0034614">
    <property type="term" value="P:cellular response to reactive oxygen species"/>
    <property type="evidence" value="ECO:0000315"/>
    <property type="project" value="UniProtKB"/>
</dbReference>
<dbReference type="GO" id="GO:0050829">
    <property type="term" value="P:defense response to Gram-negative bacterium"/>
    <property type="evidence" value="ECO:0000315"/>
    <property type="project" value="UniProtKB"/>
</dbReference>
<dbReference type="GO" id="GO:0045824">
    <property type="term" value="P:negative regulation of innate immune response"/>
    <property type="evidence" value="ECO:0000315"/>
    <property type="project" value="WormBase"/>
</dbReference>
<dbReference type="GO" id="GO:0000122">
    <property type="term" value="P:negative regulation of transcription by RNA polymerase II"/>
    <property type="evidence" value="ECO:0000315"/>
    <property type="project" value="WormBase"/>
</dbReference>
<dbReference type="GO" id="GO:0045089">
    <property type="term" value="P:positive regulation of innate immune response"/>
    <property type="evidence" value="ECO:0000315"/>
    <property type="project" value="WormBase"/>
</dbReference>
<dbReference type="GO" id="GO:0045944">
    <property type="term" value="P:positive regulation of transcription by RNA polymerase II"/>
    <property type="evidence" value="ECO:0000315"/>
    <property type="project" value="WormBase"/>
</dbReference>
<dbReference type="GO" id="GO:0010468">
    <property type="term" value="P:regulation of gene expression"/>
    <property type="evidence" value="ECO:0000315"/>
    <property type="project" value="UniProtKB"/>
</dbReference>
<dbReference type="GO" id="GO:0006357">
    <property type="term" value="P:regulation of transcription by RNA polymerase II"/>
    <property type="evidence" value="ECO:0000315"/>
    <property type="project" value="UniProtKB"/>
</dbReference>
<dbReference type="GO" id="GO:0042427">
    <property type="term" value="P:serotonin biosynthetic process"/>
    <property type="evidence" value="ECO:0000315"/>
    <property type="project" value="UniProtKB"/>
</dbReference>
<dbReference type="CDD" id="cd14687">
    <property type="entry name" value="bZIP_ATF2"/>
    <property type="match status" value="1"/>
</dbReference>
<dbReference type="FunFam" id="1.20.5.170:FF:000119">
    <property type="entry name" value="ATF (cAMP-dependent transcription factor) family"/>
    <property type="match status" value="1"/>
</dbReference>
<dbReference type="Gene3D" id="1.20.5.170">
    <property type="match status" value="1"/>
</dbReference>
<dbReference type="InterPro" id="IPR004827">
    <property type="entry name" value="bZIP"/>
</dbReference>
<dbReference type="InterPro" id="IPR046347">
    <property type="entry name" value="bZIP_sf"/>
</dbReference>
<dbReference type="InterPro" id="IPR051027">
    <property type="entry name" value="bZIP_transcription_factors"/>
</dbReference>
<dbReference type="PANTHER" id="PTHR19304">
    <property type="entry name" value="CYCLIC-AMP RESPONSE ELEMENT BINDING PROTEIN"/>
    <property type="match status" value="1"/>
</dbReference>
<dbReference type="Pfam" id="PF07716">
    <property type="entry name" value="bZIP_2"/>
    <property type="match status" value="1"/>
</dbReference>
<dbReference type="SMART" id="SM00338">
    <property type="entry name" value="BRLZ"/>
    <property type="match status" value="1"/>
</dbReference>
<dbReference type="SUPFAM" id="SSF57959">
    <property type="entry name" value="Leucine zipper domain"/>
    <property type="match status" value="1"/>
</dbReference>
<sequence>MATTMMTSSASPPESGELDVASAVASAAAALISPMVMPTSMTNGKDMTKTSQILNEYFNMMVGKRVQLMGDTTSPFSLDTPNPKLMFTPLDLPTTAELMQRCLAVNPFEAKFREANQKISSGSMQPNTSGANQSLEALEANGGSQFSGSNAGTMSDLLLKIPQASLQHSPGIFSNMLLNAGDSEGTTRENLKTADISKLLSVAGDFSAQAPRTADVLNAVLDMHSDRLHTINYLNNKPDFSALLRSPSSSAPNSASVLTNAMAIPSTSGAPFPGTTLLVPPKTVSSYHSPLGASSQPPSTQKSPADGSWDHINGEKQIKKEIPYFNDDAMMLMERSNMSSSGSDQDQSADMSNAGSTASTSTGNPVGRPQNGTPGRGRGRGRSTTADMQPDERRNTILERNKAAAVRYRKRKKEEHDDMMGRVQAMEAEKNQLLAIQTQNQVLRRELERVTALLTERESRCVCLKGVPMSDEQHADHHHRNTNGMYSGSDMLNGLGQINGMQLKLPKLQ</sequence>
<accession>Q86MD3</accession>
<accession>B3GWA6</accession>
<accession>Q17801</accession>
<accession>Q9U3R1</accession>